<dbReference type="EMBL" id="CP000538">
    <property type="protein sequence ID" value="EAQ72475.1"/>
    <property type="molecule type" value="Genomic_DNA"/>
</dbReference>
<dbReference type="RefSeq" id="WP_002861373.1">
    <property type="nucleotide sequence ID" value="NC_008787.1"/>
</dbReference>
<dbReference type="SMR" id="A1VZ42"/>
<dbReference type="KEGG" id="cjj:CJJ81176_0710"/>
<dbReference type="eggNOG" id="COG2063">
    <property type="taxonomic scope" value="Bacteria"/>
</dbReference>
<dbReference type="HOGENOM" id="CLU_069313_1_1_7"/>
<dbReference type="Proteomes" id="UP000000646">
    <property type="component" value="Chromosome"/>
</dbReference>
<dbReference type="GO" id="GO:0009427">
    <property type="term" value="C:bacterial-type flagellum basal body, distal rod, L ring"/>
    <property type="evidence" value="ECO:0007669"/>
    <property type="project" value="InterPro"/>
</dbReference>
<dbReference type="GO" id="GO:0009279">
    <property type="term" value="C:cell outer membrane"/>
    <property type="evidence" value="ECO:0007669"/>
    <property type="project" value="UniProtKB-SubCell"/>
</dbReference>
<dbReference type="GO" id="GO:0003774">
    <property type="term" value="F:cytoskeletal motor activity"/>
    <property type="evidence" value="ECO:0007669"/>
    <property type="project" value="InterPro"/>
</dbReference>
<dbReference type="GO" id="GO:0071973">
    <property type="term" value="P:bacterial-type flagellum-dependent cell motility"/>
    <property type="evidence" value="ECO:0007669"/>
    <property type="project" value="InterPro"/>
</dbReference>
<dbReference type="HAMAP" id="MF_00415">
    <property type="entry name" value="FlgH"/>
    <property type="match status" value="1"/>
</dbReference>
<dbReference type="InterPro" id="IPR000527">
    <property type="entry name" value="Flag_Lring"/>
</dbReference>
<dbReference type="NCBIfam" id="NF001303">
    <property type="entry name" value="PRK00249.1-3"/>
    <property type="match status" value="1"/>
</dbReference>
<dbReference type="PANTHER" id="PTHR34933">
    <property type="entry name" value="FLAGELLAR L-RING PROTEIN"/>
    <property type="match status" value="1"/>
</dbReference>
<dbReference type="PANTHER" id="PTHR34933:SF1">
    <property type="entry name" value="FLAGELLAR L-RING PROTEIN"/>
    <property type="match status" value="1"/>
</dbReference>
<dbReference type="Pfam" id="PF02107">
    <property type="entry name" value="FlgH"/>
    <property type="match status" value="1"/>
</dbReference>
<dbReference type="PRINTS" id="PR01008">
    <property type="entry name" value="FLGLRINGFLGH"/>
</dbReference>
<dbReference type="PROSITE" id="PS51257">
    <property type="entry name" value="PROKAR_LIPOPROTEIN"/>
    <property type="match status" value="1"/>
</dbReference>
<accession>A1VZ42</accession>
<protein>
    <recommendedName>
        <fullName evidence="1">Flagellar L-ring protein</fullName>
    </recommendedName>
    <alternativeName>
        <fullName evidence="1">Basal body L-ring protein</fullName>
    </alternativeName>
</protein>
<proteinExistence type="inferred from homology"/>
<evidence type="ECO:0000255" key="1">
    <source>
        <dbReference type="HAMAP-Rule" id="MF_00415"/>
    </source>
</evidence>
<keyword id="KW-0975">Bacterial flagellum</keyword>
<keyword id="KW-0998">Cell outer membrane</keyword>
<keyword id="KW-0449">Lipoprotein</keyword>
<keyword id="KW-0472">Membrane</keyword>
<keyword id="KW-0564">Palmitate</keyword>
<keyword id="KW-0732">Signal</keyword>
<gene>
    <name evidence="1" type="primary">flgH</name>
    <name type="ordered locus">CJJ81176_0710</name>
</gene>
<organism>
    <name type="scientific">Campylobacter jejuni subsp. jejuni serotype O:23/36 (strain 81-176)</name>
    <dbReference type="NCBI Taxonomy" id="354242"/>
    <lineage>
        <taxon>Bacteria</taxon>
        <taxon>Pseudomonadati</taxon>
        <taxon>Campylobacterota</taxon>
        <taxon>Epsilonproteobacteria</taxon>
        <taxon>Campylobacterales</taxon>
        <taxon>Campylobacteraceae</taxon>
        <taxon>Campylobacter</taxon>
    </lineage>
</organism>
<reference key="1">
    <citation type="submission" date="2006-12" db="EMBL/GenBank/DDBJ databases">
        <authorList>
            <person name="Fouts D.E."/>
            <person name="Nelson K.E."/>
            <person name="Sebastian Y."/>
        </authorList>
    </citation>
    <scope>NUCLEOTIDE SEQUENCE [LARGE SCALE GENOMIC DNA]</scope>
    <source>
        <strain>81-176</strain>
    </source>
</reference>
<comment type="function">
    <text evidence="1">Assembles around the rod to form the L-ring and probably protects the motor/basal body from shearing forces during rotation.</text>
</comment>
<comment type="subunit">
    <text evidence="1">The basal body constitutes a major portion of the flagellar organelle and consists of four rings (L,P,S, and M) mounted on a central rod.</text>
</comment>
<comment type="subcellular location">
    <subcellularLocation>
        <location evidence="1">Cell outer membrane</location>
        <topology evidence="1">Lipid-anchor</topology>
    </subcellularLocation>
    <subcellularLocation>
        <location evidence="1">Bacterial flagellum basal body</location>
    </subcellularLocation>
</comment>
<comment type="similarity">
    <text evidence="1">Belongs to the FlgH family.</text>
</comment>
<sequence length="232" mass="25168">MKKVLFYVLPFAFFGCSATVDPQISMKPPAYVEELAPKQSNNVESAPGSLFGKGDNPLFSDKKAMNVNDLVTVVIQESTTQSTQANKATSRTNTSNLGGGALTGSSGVVANALNKVNAYSNIGFQTNSSNKYTGTGSQSRNESFNTTISTRVIKILSNGNYFIEGSRELLINGEKQIIQLSGVIRPYDIGQDNTIDSKYIADAKILYKTEGEVDRSTRKPWGSKVIEAIWPF</sequence>
<name>FLGH_CAMJJ</name>
<feature type="signal peptide" evidence="1">
    <location>
        <begin position="1"/>
        <end position="15"/>
    </location>
</feature>
<feature type="chain" id="PRO_1000050086" description="Flagellar L-ring protein">
    <location>
        <begin position="16"/>
        <end position="232"/>
    </location>
</feature>
<feature type="lipid moiety-binding region" description="N-palmitoyl cysteine" evidence="1">
    <location>
        <position position="16"/>
    </location>
</feature>
<feature type="lipid moiety-binding region" description="S-diacylglycerol cysteine" evidence="1">
    <location>
        <position position="16"/>
    </location>
</feature>